<sequence length="119" mass="12926">MISKPDKNKLRLKRHRRVRGKISGTAERPRLSVFRSNTNIYAQLIDDVAGVTLASASTLDKSVSKDATKVEQAQAVGKAIAEAGKAKGITEVVFDRGGYIYHGRVKALADAARENGLEF</sequence>
<comment type="function">
    <text evidence="1">This is one of the proteins that bind and probably mediate the attachment of the 5S RNA into the large ribosomal subunit, where it forms part of the central protuberance.</text>
</comment>
<comment type="subunit">
    <text evidence="1">Part of the 50S ribosomal subunit; part of the 5S rRNA/L5/L18/L25 subcomplex. Contacts the 5S and 23S rRNAs.</text>
</comment>
<comment type="similarity">
    <text evidence="1">Belongs to the universal ribosomal protein uL18 family.</text>
</comment>
<dbReference type="EMBL" id="CP000412">
    <property type="protein sequence ID" value="ABJ58023.1"/>
    <property type="molecule type" value="Genomic_DNA"/>
</dbReference>
<dbReference type="RefSeq" id="WP_002878185.1">
    <property type="nucleotide sequence ID" value="NC_008529.1"/>
</dbReference>
<dbReference type="SMR" id="Q04BZ9"/>
<dbReference type="GeneID" id="69668442"/>
<dbReference type="KEGG" id="lbu:LBUL_0366"/>
<dbReference type="HOGENOM" id="CLU_098841_0_1_9"/>
<dbReference type="BioCyc" id="LDEL321956:LBUL_RS01710-MONOMER"/>
<dbReference type="GO" id="GO:0022625">
    <property type="term" value="C:cytosolic large ribosomal subunit"/>
    <property type="evidence" value="ECO:0007669"/>
    <property type="project" value="TreeGrafter"/>
</dbReference>
<dbReference type="GO" id="GO:0008097">
    <property type="term" value="F:5S rRNA binding"/>
    <property type="evidence" value="ECO:0007669"/>
    <property type="project" value="TreeGrafter"/>
</dbReference>
<dbReference type="GO" id="GO:0003735">
    <property type="term" value="F:structural constituent of ribosome"/>
    <property type="evidence" value="ECO:0007669"/>
    <property type="project" value="InterPro"/>
</dbReference>
<dbReference type="GO" id="GO:0006412">
    <property type="term" value="P:translation"/>
    <property type="evidence" value="ECO:0007669"/>
    <property type="project" value="UniProtKB-UniRule"/>
</dbReference>
<dbReference type="CDD" id="cd00432">
    <property type="entry name" value="Ribosomal_L18_L5e"/>
    <property type="match status" value="1"/>
</dbReference>
<dbReference type="FunFam" id="3.30.420.100:FF:000001">
    <property type="entry name" value="50S ribosomal protein L18"/>
    <property type="match status" value="1"/>
</dbReference>
<dbReference type="Gene3D" id="3.30.420.100">
    <property type="match status" value="1"/>
</dbReference>
<dbReference type="HAMAP" id="MF_01337_B">
    <property type="entry name" value="Ribosomal_uL18_B"/>
    <property type="match status" value="1"/>
</dbReference>
<dbReference type="InterPro" id="IPR004389">
    <property type="entry name" value="Ribosomal_uL18_bac-type"/>
</dbReference>
<dbReference type="InterPro" id="IPR005484">
    <property type="entry name" value="Ribosomal_uL18_bac/euk"/>
</dbReference>
<dbReference type="NCBIfam" id="TIGR00060">
    <property type="entry name" value="L18_bact"/>
    <property type="match status" value="1"/>
</dbReference>
<dbReference type="PANTHER" id="PTHR12899">
    <property type="entry name" value="39S RIBOSOMAL PROTEIN L18, MITOCHONDRIAL"/>
    <property type="match status" value="1"/>
</dbReference>
<dbReference type="PANTHER" id="PTHR12899:SF3">
    <property type="entry name" value="LARGE RIBOSOMAL SUBUNIT PROTEIN UL18M"/>
    <property type="match status" value="1"/>
</dbReference>
<dbReference type="Pfam" id="PF00861">
    <property type="entry name" value="Ribosomal_L18p"/>
    <property type="match status" value="1"/>
</dbReference>
<dbReference type="SUPFAM" id="SSF53137">
    <property type="entry name" value="Translational machinery components"/>
    <property type="match status" value="1"/>
</dbReference>
<name>RL18_LACDB</name>
<protein>
    <recommendedName>
        <fullName evidence="1">Large ribosomal subunit protein uL18</fullName>
    </recommendedName>
    <alternativeName>
        <fullName evidence="2">50S ribosomal protein L18</fullName>
    </alternativeName>
</protein>
<accession>Q04BZ9</accession>
<gene>
    <name evidence="1" type="primary">rplR</name>
    <name type="ordered locus">LBUL_0366</name>
</gene>
<evidence type="ECO:0000255" key="1">
    <source>
        <dbReference type="HAMAP-Rule" id="MF_01337"/>
    </source>
</evidence>
<evidence type="ECO:0000305" key="2"/>
<organism>
    <name type="scientific">Lactobacillus delbrueckii subsp. bulgaricus (strain ATCC BAA-365 / Lb-18)</name>
    <dbReference type="NCBI Taxonomy" id="321956"/>
    <lineage>
        <taxon>Bacteria</taxon>
        <taxon>Bacillati</taxon>
        <taxon>Bacillota</taxon>
        <taxon>Bacilli</taxon>
        <taxon>Lactobacillales</taxon>
        <taxon>Lactobacillaceae</taxon>
        <taxon>Lactobacillus</taxon>
    </lineage>
</organism>
<reference key="1">
    <citation type="journal article" date="2006" name="Proc. Natl. Acad. Sci. U.S.A.">
        <title>Comparative genomics of the lactic acid bacteria.</title>
        <authorList>
            <person name="Makarova K.S."/>
            <person name="Slesarev A."/>
            <person name="Wolf Y.I."/>
            <person name="Sorokin A."/>
            <person name="Mirkin B."/>
            <person name="Koonin E.V."/>
            <person name="Pavlov A."/>
            <person name="Pavlova N."/>
            <person name="Karamychev V."/>
            <person name="Polouchine N."/>
            <person name="Shakhova V."/>
            <person name="Grigoriev I."/>
            <person name="Lou Y."/>
            <person name="Rohksar D."/>
            <person name="Lucas S."/>
            <person name="Huang K."/>
            <person name="Goodstein D.M."/>
            <person name="Hawkins T."/>
            <person name="Plengvidhya V."/>
            <person name="Welker D."/>
            <person name="Hughes J."/>
            <person name="Goh Y."/>
            <person name="Benson A."/>
            <person name="Baldwin K."/>
            <person name="Lee J.-H."/>
            <person name="Diaz-Muniz I."/>
            <person name="Dosti B."/>
            <person name="Smeianov V."/>
            <person name="Wechter W."/>
            <person name="Barabote R."/>
            <person name="Lorca G."/>
            <person name="Altermann E."/>
            <person name="Barrangou R."/>
            <person name="Ganesan B."/>
            <person name="Xie Y."/>
            <person name="Rawsthorne H."/>
            <person name="Tamir D."/>
            <person name="Parker C."/>
            <person name="Breidt F."/>
            <person name="Broadbent J.R."/>
            <person name="Hutkins R."/>
            <person name="O'Sullivan D."/>
            <person name="Steele J."/>
            <person name="Unlu G."/>
            <person name="Saier M.H. Jr."/>
            <person name="Klaenhammer T."/>
            <person name="Richardson P."/>
            <person name="Kozyavkin S."/>
            <person name="Weimer B.C."/>
            <person name="Mills D.A."/>
        </authorList>
    </citation>
    <scope>NUCLEOTIDE SEQUENCE [LARGE SCALE GENOMIC DNA]</scope>
    <source>
        <strain>ATCC BAA-365 / Lb-18</strain>
    </source>
</reference>
<feature type="chain" id="PRO_1000053044" description="Large ribosomal subunit protein uL18">
    <location>
        <begin position="1"/>
        <end position="119"/>
    </location>
</feature>
<proteinExistence type="inferred from homology"/>
<keyword id="KW-0687">Ribonucleoprotein</keyword>
<keyword id="KW-0689">Ribosomal protein</keyword>
<keyword id="KW-0694">RNA-binding</keyword>
<keyword id="KW-0699">rRNA-binding</keyword>